<feature type="chain" id="PRO_1000017473" description="Large ribosomal subunit protein bL27">
    <location>
        <begin position="1"/>
        <end position="88"/>
    </location>
</feature>
<feature type="region of interest" description="Disordered" evidence="2">
    <location>
        <begin position="1"/>
        <end position="24"/>
    </location>
</feature>
<sequence>MATKKSGGSSGNGRDSRGRRLGVKKFGSEKVIPGNIIIRQRGTKYHPGKNVGIGKDHTIFSKISGFVHFRKGVYNKTFVDVLEASSVS</sequence>
<comment type="similarity">
    <text evidence="1">Belongs to the bacterial ribosomal protein bL27 family.</text>
</comment>
<dbReference type="EMBL" id="CP000236">
    <property type="protein sequence ID" value="ABD44879.1"/>
    <property type="molecule type" value="Genomic_DNA"/>
</dbReference>
<dbReference type="RefSeq" id="WP_006010551.1">
    <property type="nucleotide sequence ID" value="NC_007799.1"/>
</dbReference>
<dbReference type="SMR" id="Q2GGS4"/>
<dbReference type="STRING" id="205920.ECH_0546"/>
<dbReference type="KEGG" id="ech:ECH_0546"/>
<dbReference type="eggNOG" id="COG0211">
    <property type="taxonomic scope" value="Bacteria"/>
</dbReference>
<dbReference type="HOGENOM" id="CLU_095424_4_1_5"/>
<dbReference type="OrthoDB" id="9803474at2"/>
<dbReference type="Proteomes" id="UP000008320">
    <property type="component" value="Chromosome"/>
</dbReference>
<dbReference type="GO" id="GO:1990904">
    <property type="term" value="C:ribonucleoprotein complex"/>
    <property type="evidence" value="ECO:0007669"/>
    <property type="project" value="UniProtKB-KW"/>
</dbReference>
<dbReference type="GO" id="GO:0005840">
    <property type="term" value="C:ribosome"/>
    <property type="evidence" value="ECO:0007669"/>
    <property type="project" value="UniProtKB-KW"/>
</dbReference>
<dbReference type="GO" id="GO:0003735">
    <property type="term" value="F:structural constituent of ribosome"/>
    <property type="evidence" value="ECO:0007669"/>
    <property type="project" value="InterPro"/>
</dbReference>
<dbReference type="GO" id="GO:0006412">
    <property type="term" value="P:translation"/>
    <property type="evidence" value="ECO:0007669"/>
    <property type="project" value="UniProtKB-UniRule"/>
</dbReference>
<dbReference type="FunFam" id="2.40.50.100:FF:000020">
    <property type="entry name" value="50S ribosomal protein L27"/>
    <property type="match status" value="1"/>
</dbReference>
<dbReference type="Gene3D" id="2.40.50.100">
    <property type="match status" value="1"/>
</dbReference>
<dbReference type="HAMAP" id="MF_00539">
    <property type="entry name" value="Ribosomal_bL27"/>
    <property type="match status" value="1"/>
</dbReference>
<dbReference type="InterPro" id="IPR001684">
    <property type="entry name" value="Ribosomal_bL27"/>
</dbReference>
<dbReference type="InterPro" id="IPR018261">
    <property type="entry name" value="Ribosomal_bL27_CS"/>
</dbReference>
<dbReference type="NCBIfam" id="TIGR00062">
    <property type="entry name" value="L27"/>
    <property type="match status" value="1"/>
</dbReference>
<dbReference type="PANTHER" id="PTHR15893:SF0">
    <property type="entry name" value="LARGE RIBOSOMAL SUBUNIT PROTEIN BL27M"/>
    <property type="match status" value="1"/>
</dbReference>
<dbReference type="PANTHER" id="PTHR15893">
    <property type="entry name" value="RIBOSOMAL PROTEIN L27"/>
    <property type="match status" value="1"/>
</dbReference>
<dbReference type="Pfam" id="PF01016">
    <property type="entry name" value="Ribosomal_L27"/>
    <property type="match status" value="1"/>
</dbReference>
<dbReference type="PRINTS" id="PR00063">
    <property type="entry name" value="RIBOSOMALL27"/>
</dbReference>
<dbReference type="SUPFAM" id="SSF110324">
    <property type="entry name" value="Ribosomal L27 protein-like"/>
    <property type="match status" value="1"/>
</dbReference>
<dbReference type="PROSITE" id="PS00831">
    <property type="entry name" value="RIBOSOMAL_L27"/>
    <property type="match status" value="1"/>
</dbReference>
<protein>
    <recommendedName>
        <fullName evidence="1">Large ribosomal subunit protein bL27</fullName>
    </recommendedName>
    <alternativeName>
        <fullName evidence="3">50S ribosomal protein L27</fullName>
    </alternativeName>
</protein>
<name>RL27_EHRCR</name>
<gene>
    <name evidence="1" type="primary">rpmA</name>
    <name type="ordered locus">ECH_0546</name>
</gene>
<proteinExistence type="inferred from homology"/>
<keyword id="KW-1185">Reference proteome</keyword>
<keyword id="KW-0687">Ribonucleoprotein</keyword>
<keyword id="KW-0689">Ribosomal protein</keyword>
<accession>Q2GGS4</accession>
<organism>
    <name type="scientific">Ehrlichia chaffeensis (strain ATCC CRL-10679 / Arkansas)</name>
    <dbReference type="NCBI Taxonomy" id="205920"/>
    <lineage>
        <taxon>Bacteria</taxon>
        <taxon>Pseudomonadati</taxon>
        <taxon>Pseudomonadota</taxon>
        <taxon>Alphaproteobacteria</taxon>
        <taxon>Rickettsiales</taxon>
        <taxon>Anaplasmataceae</taxon>
        <taxon>Ehrlichia</taxon>
    </lineage>
</organism>
<reference key="1">
    <citation type="journal article" date="2006" name="PLoS Genet.">
        <title>Comparative genomics of emerging human ehrlichiosis agents.</title>
        <authorList>
            <person name="Dunning Hotopp J.C."/>
            <person name="Lin M."/>
            <person name="Madupu R."/>
            <person name="Crabtree J."/>
            <person name="Angiuoli S.V."/>
            <person name="Eisen J.A."/>
            <person name="Seshadri R."/>
            <person name="Ren Q."/>
            <person name="Wu M."/>
            <person name="Utterback T.R."/>
            <person name="Smith S."/>
            <person name="Lewis M."/>
            <person name="Khouri H."/>
            <person name="Zhang C."/>
            <person name="Niu H."/>
            <person name="Lin Q."/>
            <person name="Ohashi N."/>
            <person name="Zhi N."/>
            <person name="Nelson W.C."/>
            <person name="Brinkac L.M."/>
            <person name="Dodson R.J."/>
            <person name="Rosovitz M.J."/>
            <person name="Sundaram J.P."/>
            <person name="Daugherty S.C."/>
            <person name="Davidsen T."/>
            <person name="Durkin A.S."/>
            <person name="Gwinn M.L."/>
            <person name="Haft D.H."/>
            <person name="Selengut J.D."/>
            <person name="Sullivan S.A."/>
            <person name="Zafar N."/>
            <person name="Zhou L."/>
            <person name="Benahmed F."/>
            <person name="Forberger H."/>
            <person name="Halpin R."/>
            <person name="Mulligan S."/>
            <person name="Robinson J."/>
            <person name="White O."/>
            <person name="Rikihisa Y."/>
            <person name="Tettelin H."/>
        </authorList>
    </citation>
    <scope>NUCLEOTIDE SEQUENCE [LARGE SCALE GENOMIC DNA]</scope>
    <source>
        <strain>ATCC CRL-10679 / Arkansas</strain>
    </source>
</reference>
<evidence type="ECO:0000255" key="1">
    <source>
        <dbReference type="HAMAP-Rule" id="MF_00539"/>
    </source>
</evidence>
<evidence type="ECO:0000256" key="2">
    <source>
        <dbReference type="SAM" id="MobiDB-lite"/>
    </source>
</evidence>
<evidence type="ECO:0000305" key="3"/>